<feature type="chain" id="PRO_1000047127" description="2,3,4,5-tetrahydropyridine-2,6-dicarboxylate N-succinyltransferase">
    <location>
        <begin position="1"/>
        <end position="275"/>
    </location>
</feature>
<feature type="binding site" evidence="1">
    <location>
        <position position="106"/>
    </location>
    <ligand>
        <name>substrate</name>
    </ligand>
</feature>
<feature type="binding site" evidence="1">
    <location>
        <position position="143"/>
    </location>
    <ligand>
        <name>substrate</name>
    </ligand>
</feature>
<accession>A3MKV6</accession>
<sequence length="275" mass="29508">MSQQLQQIIDNAWENRAELSPKAASAEIREAVAHAIEQLDRGALRVAEKIDGAWTVHQWLKKAVLLSFRLEDNAPMPAGGYSQFYDKVPSKFANYTAEDFAAGGFRVVPPAIARRGSFIAKNVVLMPSYTNIGAYVDEGTMVDTWATVGSCAQIGKNVHLSGGVGIGGVLEPLQANPVIIEDNCFIGARSEVVEGVIVEENSVISMGVYLGQSTKIYDRETGEVTYGRIPAGSVVVAGNLPAKDGTHSLYCAVIVKKVDAKTRAKVGLNELLRGD</sequence>
<reference key="1">
    <citation type="journal article" date="2010" name="Genome Biol. Evol.">
        <title>Continuing evolution of Burkholderia mallei through genome reduction and large-scale rearrangements.</title>
        <authorList>
            <person name="Losada L."/>
            <person name="Ronning C.M."/>
            <person name="DeShazer D."/>
            <person name="Woods D."/>
            <person name="Fedorova N."/>
            <person name="Kim H.S."/>
            <person name="Shabalina S.A."/>
            <person name="Pearson T.R."/>
            <person name="Brinkac L."/>
            <person name="Tan P."/>
            <person name="Nandi T."/>
            <person name="Crabtree J."/>
            <person name="Badger J."/>
            <person name="Beckstrom-Sternberg S."/>
            <person name="Saqib M."/>
            <person name="Schutzer S.E."/>
            <person name="Keim P."/>
            <person name="Nierman W.C."/>
        </authorList>
    </citation>
    <scope>NUCLEOTIDE SEQUENCE [LARGE SCALE GENOMIC DNA]</scope>
    <source>
        <strain>NCTC 10247</strain>
    </source>
</reference>
<protein>
    <recommendedName>
        <fullName evidence="1">2,3,4,5-tetrahydropyridine-2,6-dicarboxylate N-succinyltransferase</fullName>
        <ecNumber evidence="1">2.3.1.117</ecNumber>
    </recommendedName>
    <alternativeName>
        <fullName evidence="1">Tetrahydrodipicolinate N-succinyltransferase</fullName>
        <shortName evidence="1">THDP succinyltransferase</shortName>
        <shortName evidence="1">THP succinyltransferase</shortName>
        <shortName evidence="1">Tetrahydropicolinate succinylase</shortName>
    </alternativeName>
</protein>
<comment type="catalytic activity">
    <reaction evidence="1">
        <text>(S)-2,3,4,5-tetrahydrodipicolinate + succinyl-CoA + H2O = (S)-2-succinylamino-6-oxoheptanedioate + CoA</text>
        <dbReference type="Rhea" id="RHEA:17325"/>
        <dbReference type="ChEBI" id="CHEBI:15377"/>
        <dbReference type="ChEBI" id="CHEBI:15685"/>
        <dbReference type="ChEBI" id="CHEBI:16845"/>
        <dbReference type="ChEBI" id="CHEBI:57287"/>
        <dbReference type="ChEBI" id="CHEBI:57292"/>
        <dbReference type="EC" id="2.3.1.117"/>
    </reaction>
</comment>
<comment type="pathway">
    <text evidence="1">Amino-acid biosynthesis; L-lysine biosynthesis via DAP pathway; LL-2,6-diaminopimelate from (S)-tetrahydrodipicolinate (succinylase route): step 1/3.</text>
</comment>
<comment type="subunit">
    <text evidence="1">Homotrimer.</text>
</comment>
<comment type="subcellular location">
    <subcellularLocation>
        <location evidence="1">Cytoplasm</location>
    </subcellularLocation>
</comment>
<comment type="similarity">
    <text evidence="1">Belongs to the transferase hexapeptide repeat family.</text>
</comment>
<organism>
    <name type="scientific">Burkholderia mallei (strain NCTC 10247)</name>
    <dbReference type="NCBI Taxonomy" id="320389"/>
    <lineage>
        <taxon>Bacteria</taxon>
        <taxon>Pseudomonadati</taxon>
        <taxon>Pseudomonadota</taxon>
        <taxon>Betaproteobacteria</taxon>
        <taxon>Burkholderiales</taxon>
        <taxon>Burkholderiaceae</taxon>
        <taxon>Burkholderia</taxon>
        <taxon>pseudomallei group</taxon>
    </lineage>
</organism>
<proteinExistence type="inferred from homology"/>
<gene>
    <name evidence="1" type="primary">dapD</name>
    <name type="ordered locus">BMA10247_1341</name>
</gene>
<evidence type="ECO:0000255" key="1">
    <source>
        <dbReference type="HAMAP-Rule" id="MF_00811"/>
    </source>
</evidence>
<dbReference type="EC" id="2.3.1.117" evidence="1"/>
<dbReference type="EMBL" id="CP000548">
    <property type="protein sequence ID" value="ABO06993.1"/>
    <property type="molecule type" value="Genomic_DNA"/>
</dbReference>
<dbReference type="RefSeq" id="WP_004191680.1">
    <property type="nucleotide sequence ID" value="NZ_CP007802.1"/>
</dbReference>
<dbReference type="SMR" id="A3MKV6"/>
<dbReference type="GeneID" id="92979291"/>
<dbReference type="KEGG" id="bmaz:BM44_1788"/>
<dbReference type="KEGG" id="bmn:BMA10247_1341"/>
<dbReference type="PATRIC" id="fig|320389.8.peg.1999"/>
<dbReference type="UniPathway" id="UPA00034">
    <property type="reaction ID" value="UER00019"/>
</dbReference>
<dbReference type="GO" id="GO:0005737">
    <property type="term" value="C:cytoplasm"/>
    <property type="evidence" value="ECO:0007669"/>
    <property type="project" value="UniProtKB-SubCell"/>
</dbReference>
<dbReference type="GO" id="GO:0008666">
    <property type="term" value="F:2,3,4,5-tetrahydropyridine-2,6-dicarboxylate N-succinyltransferase activity"/>
    <property type="evidence" value="ECO:0007669"/>
    <property type="project" value="UniProtKB-UniRule"/>
</dbReference>
<dbReference type="GO" id="GO:0016779">
    <property type="term" value="F:nucleotidyltransferase activity"/>
    <property type="evidence" value="ECO:0007669"/>
    <property type="project" value="TreeGrafter"/>
</dbReference>
<dbReference type="GO" id="GO:0019877">
    <property type="term" value="P:diaminopimelate biosynthetic process"/>
    <property type="evidence" value="ECO:0007669"/>
    <property type="project" value="UniProtKB-UniRule"/>
</dbReference>
<dbReference type="GO" id="GO:0009089">
    <property type="term" value="P:lysine biosynthetic process via diaminopimelate"/>
    <property type="evidence" value="ECO:0007669"/>
    <property type="project" value="UniProtKB-UniRule"/>
</dbReference>
<dbReference type="CDD" id="cd03350">
    <property type="entry name" value="LbH_THP_succinylT"/>
    <property type="match status" value="1"/>
</dbReference>
<dbReference type="Gene3D" id="2.160.10.10">
    <property type="entry name" value="Hexapeptide repeat proteins"/>
    <property type="match status" value="1"/>
</dbReference>
<dbReference type="Gene3D" id="1.10.166.10">
    <property type="entry name" value="Tetrahydrodipicolinate-N-succinyltransferase, N-terminal domain"/>
    <property type="match status" value="1"/>
</dbReference>
<dbReference type="HAMAP" id="MF_00811">
    <property type="entry name" value="DapD"/>
    <property type="match status" value="1"/>
</dbReference>
<dbReference type="InterPro" id="IPR005664">
    <property type="entry name" value="DapD_Trfase_Hexpep_rpt_fam"/>
</dbReference>
<dbReference type="InterPro" id="IPR001451">
    <property type="entry name" value="Hexapep"/>
</dbReference>
<dbReference type="InterPro" id="IPR018357">
    <property type="entry name" value="Hexapep_transf_CS"/>
</dbReference>
<dbReference type="InterPro" id="IPR023180">
    <property type="entry name" value="THP_succinylTrfase_dom1"/>
</dbReference>
<dbReference type="InterPro" id="IPR037133">
    <property type="entry name" value="THP_succinylTrfase_N_sf"/>
</dbReference>
<dbReference type="InterPro" id="IPR011004">
    <property type="entry name" value="Trimer_LpxA-like_sf"/>
</dbReference>
<dbReference type="NCBIfam" id="TIGR00965">
    <property type="entry name" value="dapD"/>
    <property type="match status" value="1"/>
</dbReference>
<dbReference type="NCBIfam" id="NF008808">
    <property type="entry name" value="PRK11830.1"/>
    <property type="match status" value="1"/>
</dbReference>
<dbReference type="PANTHER" id="PTHR19136:SF52">
    <property type="entry name" value="2,3,4,5-TETRAHYDROPYRIDINE-2,6-DICARBOXYLATE N-SUCCINYLTRANSFERASE"/>
    <property type="match status" value="1"/>
</dbReference>
<dbReference type="PANTHER" id="PTHR19136">
    <property type="entry name" value="MOLYBDENUM COFACTOR GUANYLYLTRANSFERASE"/>
    <property type="match status" value="1"/>
</dbReference>
<dbReference type="Pfam" id="PF14602">
    <property type="entry name" value="Hexapep_2"/>
    <property type="match status" value="1"/>
</dbReference>
<dbReference type="Pfam" id="PF14805">
    <property type="entry name" value="THDPS_N_2"/>
    <property type="match status" value="1"/>
</dbReference>
<dbReference type="SUPFAM" id="SSF51161">
    <property type="entry name" value="Trimeric LpxA-like enzymes"/>
    <property type="match status" value="1"/>
</dbReference>
<dbReference type="PROSITE" id="PS00101">
    <property type="entry name" value="HEXAPEP_TRANSFERASES"/>
    <property type="match status" value="1"/>
</dbReference>
<keyword id="KW-0012">Acyltransferase</keyword>
<keyword id="KW-0028">Amino-acid biosynthesis</keyword>
<keyword id="KW-0963">Cytoplasm</keyword>
<keyword id="KW-0220">Diaminopimelate biosynthesis</keyword>
<keyword id="KW-0457">Lysine biosynthesis</keyword>
<keyword id="KW-0677">Repeat</keyword>
<keyword id="KW-0808">Transferase</keyword>
<name>DAPD_BURM7</name>